<accession>Q6NJF6</accession>
<protein>
    <recommendedName>
        <fullName evidence="1">DNA-directed RNA polymerase subunit beta'</fullName>
        <shortName evidence="1">RNAP subunit beta'</shortName>
        <ecNumber evidence="1">2.7.7.6</ecNumber>
    </recommendedName>
    <alternativeName>
        <fullName evidence="1">RNA polymerase subunit beta'</fullName>
    </alternativeName>
    <alternativeName>
        <fullName evidence="1">Transcriptase subunit beta'</fullName>
    </alternativeName>
</protein>
<organism>
    <name type="scientific">Corynebacterium diphtheriae (strain ATCC 700971 / NCTC 13129 / Biotype gravis)</name>
    <dbReference type="NCBI Taxonomy" id="257309"/>
    <lineage>
        <taxon>Bacteria</taxon>
        <taxon>Bacillati</taxon>
        <taxon>Actinomycetota</taxon>
        <taxon>Actinomycetes</taxon>
        <taxon>Mycobacteriales</taxon>
        <taxon>Corynebacteriaceae</taxon>
        <taxon>Corynebacterium</taxon>
    </lineage>
</organism>
<sequence>MIDVNFFDELRIGLATADDIRRWSKGEVKKPETINYRTLKPEKDGLFCERIFGPTRDWECACGKYKRVRYKGIICERCGVEVTKSKVRRERMGHIELAAPVTHIWYFKGVPSRLGYLLDLAPKDLERIIYFAANIITSVDDEARHADQTTLEAEMLLEKKDVEADMESEIAERAAKLEEDLAELEAAGAKADARNKVKKAAEKEMQHIRERAEREIDRLEEIWQTFIKLAPKQMIIDETIYEELVDRYEDYFTGGMGAEAIQTLIRNFDLDSEAEELREIINNGKGQKKMRALKRLKVVAAFQRSGNDPAGMVLDCIPVIPPELRPMVQLDGGRFATSDLNDLYRRVINRNNRLKRMIELGAPEIIVNNEKRMLQESVDALFDNGRRGRPVTGPGNRPLKSLSDLLKGKQGRFRQNLLGKRVDYSGRSVIIVGPQLKLHECGLPKLMALELFKPFVMKRLVENDYAQNIKSAKRMVERQRPEVWDVLEEAISEHPVMLNRAPTLHRLGIQAFEPKLVEGKAIQLHPLACEAFNADFDGDQMAVHLPLSAEAQAEARILMLASNNILSPASGKPLAMPRLDMVTGLYYLTMDKNENEIGGQGAYASATEEGPAQGVYSSYAEAIMARDRGVLGLQAKIKVRISHLRPPVDIEAEQFPEGWNKGDVWLADTTLGRIMFNELLPWNYPYLEGVMVRKGGGTGKIMLGDVINDLAATYPMITVAQTMDKMKDAGFYWATRSGVTITMSDVLVLPNKEEILDRYEAEARKIERKYWEQGALTERERYDRLVELWKDATDEVGNAVEKLYPDDNPIPMIVKSGAAGNMRQIWTLAGMKGMVVNSKGDYITRPIKTSFREGLSVLEYFNNSHGSRKGLADTALRTADSGYLTRRLVDVAQDVIVREDDCGTKQGIRVPVAVEVKDAEGNVTGYTGHSLIETSVAGRVAATAVKDAEGNVMVEPGENLTDQLIDELIAAGVKEVKVRSVLTCQTPTGVCAKCYGKSMATGKLVDIGEAVGIVAAQSIGEPGTQLTMRTFHQGGVGGDITGGLPRVQELFEARVPKNRAPIASVAGTVHLDDEGNFYTLTINPDDGSDVVVYEKLSKRQGLATVRVPMESNPGAMIERTLAEGDHVEVGDRLLRGPADPHDVLEVLGRRGVEQHLVDEVQDVYRAQGVAIHDKHIEIIIRQMLRRGTVIESGSTEFLPGTLVDLSEAKAANAEALANGGQPAELRSEIMGITKASLATESWLSAASFQETTRVLTDAAINKRSDKLIGLKENVIIGKLIPAGTGISRYRNISVKPTEAARNAAYSIPTYGDSIYGDDGYGEFTGASVPLDEAYDL</sequence>
<comment type="function">
    <text evidence="1">DNA-dependent RNA polymerase catalyzes the transcription of DNA into RNA using the four ribonucleoside triphosphates as substrates.</text>
</comment>
<comment type="catalytic activity">
    <reaction evidence="1">
        <text>RNA(n) + a ribonucleoside 5'-triphosphate = RNA(n+1) + diphosphate</text>
        <dbReference type="Rhea" id="RHEA:21248"/>
        <dbReference type="Rhea" id="RHEA-COMP:14527"/>
        <dbReference type="Rhea" id="RHEA-COMP:17342"/>
        <dbReference type="ChEBI" id="CHEBI:33019"/>
        <dbReference type="ChEBI" id="CHEBI:61557"/>
        <dbReference type="ChEBI" id="CHEBI:140395"/>
        <dbReference type="EC" id="2.7.7.6"/>
    </reaction>
</comment>
<comment type="cofactor">
    <cofactor evidence="1">
        <name>Mg(2+)</name>
        <dbReference type="ChEBI" id="CHEBI:18420"/>
    </cofactor>
    <text evidence="1">Binds 1 Mg(2+) ion per subunit.</text>
</comment>
<comment type="cofactor">
    <cofactor evidence="1">
        <name>Zn(2+)</name>
        <dbReference type="ChEBI" id="CHEBI:29105"/>
    </cofactor>
    <text evidence="1">Binds 2 Zn(2+) ions per subunit.</text>
</comment>
<comment type="subunit">
    <text evidence="1">The RNAP catalytic core consists of 2 alpha, 1 beta, 1 beta' and 1 omega subunit. When a sigma factor is associated with the core the holoenzyme is formed, which can initiate transcription.</text>
</comment>
<comment type="similarity">
    <text evidence="1">Belongs to the RNA polymerase beta' chain family.</text>
</comment>
<dbReference type="EC" id="2.7.7.6" evidence="1"/>
<dbReference type="EMBL" id="BX248355">
    <property type="protein sequence ID" value="CAE48952.1"/>
    <property type="molecule type" value="Genomic_DNA"/>
</dbReference>
<dbReference type="RefSeq" id="WP_010934310.1">
    <property type="nucleotide sequence ID" value="NC_002935.2"/>
</dbReference>
<dbReference type="SMR" id="Q6NJF6"/>
<dbReference type="STRING" id="257309.DIP0447"/>
<dbReference type="KEGG" id="cdi:DIP0447"/>
<dbReference type="HOGENOM" id="CLU_000524_3_0_11"/>
<dbReference type="Proteomes" id="UP000002198">
    <property type="component" value="Chromosome"/>
</dbReference>
<dbReference type="GO" id="GO:0000428">
    <property type="term" value="C:DNA-directed RNA polymerase complex"/>
    <property type="evidence" value="ECO:0007669"/>
    <property type="project" value="UniProtKB-KW"/>
</dbReference>
<dbReference type="GO" id="GO:0003677">
    <property type="term" value="F:DNA binding"/>
    <property type="evidence" value="ECO:0007669"/>
    <property type="project" value="UniProtKB-UniRule"/>
</dbReference>
<dbReference type="GO" id="GO:0003899">
    <property type="term" value="F:DNA-directed RNA polymerase activity"/>
    <property type="evidence" value="ECO:0007669"/>
    <property type="project" value="UniProtKB-UniRule"/>
</dbReference>
<dbReference type="GO" id="GO:0000287">
    <property type="term" value="F:magnesium ion binding"/>
    <property type="evidence" value="ECO:0007669"/>
    <property type="project" value="UniProtKB-UniRule"/>
</dbReference>
<dbReference type="GO" id="GO:0008270">
    <property type="term" value="F:zinc ion binding"/>
    <property type="evidence" value="ECO:0007669"/>
    <property type="project" value="UniProtKB-UniRule"/>
</dbReference>
<dbReference type="GO" id="GO:0006351">
    <property type="term" value="P:DNA-templated transcription"/>
    <property type="evidence" value="ECO:0007669"/>
    <property type="project" value="UniProtKB-UniRule"/>
</dbReference>
<dbReference type="CDD" id="cd02655">
    <property type="entry name" value="RNAP_beta'_C"/>
    <property type="match status" value="1"/>
</dbReference>
<dbReference type="CDD" id="cd01609">
    <property type="entry name" value="RNAP_beta'_N"/>
    <property type="match status" value="1"/>
</dbReference>
<dbReference type="FunFam" id="1.10.150.390:FF:000002">
    <property type="entry name" value="DNA-directed RNA polymerase subunit beta"/>
    <property type="match status" value="1"/>
</dbReference>
<dbReference type="FunFam" id="1.10.40.90:FF:000001">
    <property type="entry name" value="DNA-directed RNA polymerase subunit beta"/>
    <property type="match status" value="1"/>
</dbReference>
<dbReference type="FunFam" id="4.10.860.120:FF:000001">
    <property type="entry name" value="DNA-directed RNA polymerase subunit beta"/>
    <property type="match status" value="1"/>
</dbReference>
<dbReference type="Gene3D" id="1.10.132.30">
    <property type="match status" value="1"/>
</dbReference>
<dbReference type="Gene3D" id="1.10.150.390">
    <property type="match status" value="1"/>
</dbReference>
<dbReference type="Gene3D" id="1.10.1790.20">
    <property type="match status" value="1"/>
</dbReference>
<dbReference type="Gene3D" id="1.10.40.90">
    <property type="match status" value="1"/>
</dbReference>
<dbReference type="Gene3D" id="2.40.40.20">
    <property type="match status" value="1"/>
</dbReference>
<dbReference type="Gene3D" id="2.40.50.100">
    <property type="match status" value="1"/>
</dbReference>
<dbReference type="Gene3D" id="4.10.860.120">
    <property type="entry name" value="RNA polymerase II, clamp domain"/>
    <property type="match status" value="1"/>
</dbReference>
<dbReference type="Gene3D" id="1.10.274.100">
    <property type="entry name" value="RNA polymerase Rpb1, domain 3"/>
    <property type="match status" value="1"/>
</dbReference>
<dbReference type="HAMAP" id="MF_01322">
    <property type="entry name" value="RNApol_bact_RpoC"/>
    <property type="match status" value="1"/>
</dbReference>
<dbReference type="InterPro" id="IPR045867">
    <property type="entry name" value="DNA-dir_RpoC_beta_prime"/>
</dbReference>
<dbReference type="InterPro" id="IPR012754">
    <property type="entry name" value="DNA-dir_RpoC_beta_prime_bact"/>
</dbReference>
<dbReference type="InterPro" id="IPR000722">
    <property type="entry name" value="RNA_pol_asu"/>
</dbReference>
<dbReference type="InterPro" id="IPR006592">
    <property type="entry name" value="RNA_pol_N"/>
</dbReference>
<dbReference type="InterPro" id="IPR007080">
    <property type="entry name" value="RNA_pol_Rpb1_1"/>
</dbReference>
<dbReference type="InterPro" id="IPR007066">
    <property type="entry name" value="RNA_pol_Rpb1_3"/>
</dbReference>
<dbReference type="InterPro" id="IPR042102">
    <property type="entry name" value="RNA_pol_Rpb1_3_sf"/>
</dbReference>
<dbReference type="InterPro" id="IPR007083">
    <property type="entry name" value="RNA_pol_Rpb1_4"/>
</dbReference>
<dbReference type="InterPro" id="IPR007081">
    <property type="entry name" value="RNA_pol_Rpb1_5"/>
</dbReference>
<dbReference type="InterPro" id="IPR044893">
    <property type="entry name" value="RNA_pol_Rpb1_clamp_domain"/>
</dbReference>
<dbReference type="InterPro" id="IPR038120">
    <property type="entry name" value="Rpb1_funnel_sf"/>
</dbReference>
<dbReference type="NCBIfam" id="NF011498">
    <property type="entry name" value="PRK14906.1"/>
    <property type="match status" value="1"/>
</dbReference>
<dbReference type="NCBIfam" id="TIGR02386">
    <property type="entry name" value="rpoC_TIGR"/>
    <property type="match status" value="1"/>
</dbReference>
<dbReference type="PANTHER" id="PTHR19376">
    <property type="entry name" value="DNA-DIRECTED RNA POLYMERASE"/>
    <property type="match status" value="1"/>
</dbReference>
<dbReference type="PANTHER" id="PTHR19376:SF54">
    <property type="entry name" value="DNA-DIRECTED RNA POLYMERASE SUBUNIT BETA"/>
    <property type="match status" value="1"/>
</dbReference>
<dbReference type="Pfam" id="PF04997">
    <property type="entry name" value="RNA_pol_Rpb1_1"/>
    <property type="match status" value="1"/>
</dbReference>
<dbReference type="Pfam" id="PF00623">
    <property type="entry name" value="RNA_pol_Rpb1_2"/>
    <property type="match status" value="1"/>
</dbReference>
<dbReference type="Pfam" id="PF04983">
    <property type="entry name" value="RNA_pol_Rpb1_3"/>
    <property type="match status" value="1"/>
</dbReference>
<dbReference type="Pfam" id="PF05000">
    <property type="entry name" value="RNA_pol_Rpb1_4"/>
    <property type="match status" value="1"/>
</dbReference>
<dbReference type="Pfam" id="PF04998">
    <property type="entry name" value="RNA_pol_Rpb1_5"/>
    <property type="match status" value="1"/>
</dbReference>
<dbReference type="SMART" id="SM00663">
    <property type="entry name" value="RPOLA_N"/>
    <property type="match status" value="1"/>
</dbReference>
<dbReference type="SUPFAM" id="SSF64484">
    <property type="entry name" value="beta and beta-prime subunits of DNA dependent RNA-polymerase"/>
    <property type="match status" value="1"/>
</dbReference>
<keyword id="KW-0240">DNA-directed RNA polymerase</keyword>
<keyword id="KW-0460">Magnesium</keyword>
<keyword id="KW-0479">Metal-binding</keyword>
<keyword id="KW-0548">Nucleotidyltransferase</keyword>
<keyword id="KW-1185">Reference proteome</keyword>
<keyword id="KW-0804">Transcription</keyword>
<keyword id="KW-0808">Transferase</keyword>
<keyword id="KW-0862">Zinc</keyword>
<reference key="1">
    <citation type="journal article" date="2003" name="Nucleic Acids Res.">
        <title>The complete genome sequence and analysis of Corynebacterium diphtheriae NCTC13129.</title>
        <authorList>
            <person name="Cerdeno-Tarraga A.-M."/>
            <person name="Efstratiou A."/>
            <person name="Dover L.G."/>
            <person name="Holden M.T.G."/>
            <person name="Pallen M.J."/>
            <person name="Bentley S.D."/>
            <person name="Besra G.S."/>
            <person name="Churcher C.M."/>
            <person name="James K.D."/>
            <person name="De Zoysa A."/>
            <person name="Chillingworth T."/>
            <person name="Cronin A."/>
            <person name="Dowd L."/>
            <person name="Feltwell T."/>
            <person name="Hamlin N."/>
            <person name="Holroyd S."/>
            <person name="Jagels K."/>
            <person name="Moule S."/>
            <person name="Quail M.A."/>
            <person name="Rabbinowitsch E."/>
            <person name="Rutherford K.M."/>
            <person name="Thomson N.R."/>
            <person name="Unwin L."/>
            <person name="Whitehead S."/>
            <person name="Barrell B.G."/>
            <person name="Parkhill J."/>
        </authorList>
    </citation>
    <scope>NUCLEOTIDE SEQUENCE [LARGE SCALE GENOMIC DNA]</scope>
    <source>
        <strain>ATCC 700971 / NCTC 13129 / Biotype gravis</strain>
    </source>
</reference>
<proteinExistence type="inferred from homology"/>
<name>RPOC_CORDI</name>
<evidence type="ECO:0000255" key="1">
    <source>
        <dbReference type="HAMAP-Rule" id="MF_01322"/>
    </source>
</evidence>
<feature type="chain" id="PRO_0000067735" description="DNA-directed RNA polymerase subunit beta'">
    <location>
        <begin position="1"/>
        <end position="1336"/>
    </location>
</feature>
<feature type="binding site" evidence="1">
    <location>
        <position position="60"/>
    </location>
    <ligand>
        <name>Zn(2+)</name>
        <dbReference type="ChEBI" id="CHEBI:29105"/>
        <label>1</label>
    </ligand>
</feature>
<feature type="binding site" evidence="1">
    <location>
        <position position="62"/>
    </location>
    <ligand>
        <name>Zn(2+)</name>
        <dbReference type="ChEBI" id="CHEBI:29105"/>
        <label>1</label>
    </ligand>
</feature>
<feature type="binding site" evidence="1">
    <location>
        <position position="75"/>
    </location>
    <ligand>
        <name>Zn(2+)</name>
        <dbReference type="ChEBI" id="CHEBI:29105"/>
        <label>1</label>
    </ligand>
</feature>
<feature type="binding site" evidence="1">
    <location>
        <position position="78"/>
    </location>
    <ligand>
        <name>Zn(2+)</name>
        <dbReference type="ChEBI" id="CHEBI:29105"/>
        <label>1</label>
    </ligand>
</feature>
<feature type="binding site" evidence="1">
    <location>
        <position position="535"/>
    </location>
    <ligand>
        <name>Mg(2+)</name>
        <dbReference type="ChEBI" id="CHEBI:18420"/>
    </ligand>
</feature>
<feature type="binding site" evidence="1">
    <location>
        <position position="537"/>
    </location>
    <ligand>
        <name>Mg(2+)</name>
        <dbReference type="ChEBI" id="CHEBI:18420"/>
    </ligand>
</feature>
<feature type="binding site" evidence="1">
    <location>
        <position position="539"/>
    </location>
    <ligand>
        <name>Mg(2+)</name>
        <dbReference type="ChEBI" id="CHEBI:18420"/>
    </ligand>
</feature>
<feature type="binding site" evidence="1">
    <location>
        <position position="902"/>
    </location>
    <ligand>
        <name>Zn(2+)</name>
        <dbReference type="ChEBI" id="CHEBI:29105"/>
        <label>2</label>
    </ligand>
</feature>
<feature type="binding site" evidence="1">
    <location>
        <position position="984"/>
    </location>
    <ligand>
        <name>Zn(2+)</name>
        <dbReference type="ChEBI" id="CHEBI:29105"/>
        <label>2</label>
    </ligand>
</feature>
<feature type="binding site" evidence="1">
    <location>
        <position position="991"/>
    </location>
    <ligand>
        <name>Zn(2+)</name>
        <dbReference type="ChEBI" id="CHEBI:29105"/>
        <label>2</label>
    </ligand>
</feature>
<feature type="binding site" evidence="1">
    <location>
        <position position="994"/>
    </location>
    <ligand>
        <name>Zn(2+)</name>
        <dbReference type="ChEBI" id="CHEBI:29105"/>
        <label>2</label>
    </ligand>
</feature>
<gene>
    <name evidence="1" type="primary">rpoC</name>
    <name type="ordered locus">DIP0447</name>
</gene>